<reference key="1">
    <citation type="journal article" date="2008" name="J. Bacteriol.">
        <title>The complete genome sequence of Actinobacillus pleuropneumoniae L20 (serotype 5b).</title>
        <authorList>
            <person name="Foote S.J."/>
            <person name="Bosse J.T."/>
            <person name="Bouevitch A.B."/>
            <person name="Langford P.R."/>
            <person name="Young N.M."/>
            <person name="Nash J.H.E."/>
        </authorList>
    </citation>
    <scope>NUCLEOTIDE SEQUENCE [LARGE SCALE GENOMIC DNA]</scope>
    <source>
        <strain>L20</strain>
    </source>
</reference>
<organism>
    <name type="scientific">Actinobacillus pleuropneumoniae serotype 5b (strain L20)</name>
    <dbReference type="NCBI Taxonomy" id="416269"/>
    <lineage>
        <taxon>Bacteria</taxon>
        <taxon>Pseudomonadati</taxon>
        <taxon>Pseudomonadota</taxon>
        <taxon>Gammaproteobacteria</taxon>
        <taxon>Pasteurellales</taxon>
        <taxon>Pasteurellaceae</taxon>
        <taxon>Actinobacillus</taxon>
    </lineage>
</organism>
<comment type="function">
    <text evidence="1">Transcription regulator that activates transcription by stimulating RNA polymerase (RNAP) recycling in case of stress conditions such as supercoiled DNA or high salt concentrations. Probably acts by releasing the RNAP, when it is trapped or immobilized on tightly supercoiled DNA. Does not activate transcription on linear DNA. Probably not involved in DNA repair.</text>
</comment>
<comment type="subunit">
    <text evidence="1">Interacts with the RNAP. Has a higher affinity for the core RNAP than for the holoenzyme. Its ATPase activity is stimulated by binding to RNAP.</text>
</comment>
<comment type="similarity">
    <text evidence="1">Belongs to the SNF2/RAD54 helicase family. RapA subfamily.</text>
</comment>
<evidence type="ECO:0000255" key="1">
    <source>
        <dbReference type="HAMAP-Rule" id="MF_01821"/>
    </source>
</evidence>
<feature type="chain" id="PRO_1000088346" description="RNA polymerase-associated protein RapA">
    <location>
        <begin position="1"/>
        <end position="969"/>
    </location>
</feature>
<feature type="domain" description="Helicase ATP-binding" evidence="1">
    <location>
        <begin position="162"/>
        <end position="339"/>
    </location>
</feature>
<feature type="domain" description="Helicase C-terminal" evidence="1">
    <location>
        <begin position="492"/>
        <end position="663"/>
    </location>
</feature>
<feature type="short sequence motif" description="DEAH box">
    <location>
        <begin position="285"/>
        <end position="288"/>
    </location>
</feature>
<feature type="binding site" evidence="1">
    <location>
        <begin position="175"/>
        <end position="182"/>
    </location>
    <ligand>
        <name>ATP</name>
        <dbReference type="ChEBI" id="CHEBI:30616"/>
    </ligand>
</feature>
<gene>
    <name evidence="1" type="primary">rapA</name>
    <name type="ordered locus">APL_0314</name>
</gene>
<accession>A3MZ32</accession>
<protein>
    <recommendedName>
        <fullName evidence="1">RNA polymerase-associated protein RapA</fullName>
        <ecNumber evidence="1">3.6.4.-</ecNumber>
    </recommendedName>
    <alternativeName>
        <fullName evidence="1">ATP-dependent helicase HepA</fullName>
    </alternativeName>
</protein>
<keyword id="KW-0010">Activator</keyword>
<keyword id="KW-0067">ATP-binding</keyword>
<keyword id="KW-0238">DNA-binding</keyword>
<keyword id="KW-0347">Helicase</keyword>
<keyword id="KW-0378">Hydrolase</keyword>
<keyword id="KW-0547">Nucleotide-binding</keyword>
<keyword id="KW-1185">Reference proteome</keyword>
<keyword id="KW-0804">Transcription</keyword>
<keyword id="KW-0805">Transcription regulation</keyword>
<sequence>MFVVGQRWISESENNLGLGIVTASDNRTVTIQFPAAEEERIYALSVAPLTRVQFQKGDRINSVEGWQLDVEEVVENQGFIIYLGKRADSGEEAVLPEMQLDHKVSFSKPQDRLFSAQIDRSDRFALRYRALQHQQAQFQSPLRGMRGIRASLIPHQLHIAKEVGQRVAPRVLLADEVGLGKTIEAGMILQQQLFSGRVERVLVLVPESLQHQWLVEMLRRFNLKFSLFDEERCSDFDKADEDGNDVSENPFDSEALVIASIDWLESSPNRAKQVLASHWDMLIVDEAHHLAWSENEPSVGYQFVERLSKQTPAVLLLTATPEQLGQESHFARLALLDADRFYDYHSFIAEQKDYKPVADAVATLLNDKPLSHDEQNSIAELLSEKDTEPMFKVINSEKSKENDRLQVRQELIRELIDRHGTSRVLFRNTRQGVKGFPHRVYHQITLEMPSQYTNALKVMGMMGGVTKDDQLYPERLFQRMNPAAKWADFDPRIEWLITFLKNHRDEKILVICKQADTAIALEQILREREAIRSAVFHEKMSIVERDRASAYFAQMEEGAQVLISSSIGSEGRNFQFASNLVLFNLPDNPDLLEQSIGRLDRIGQKNDIQIHVPCFENSMQMVLATWYHQGLNAFEETCPMGAALFREFGEELEGFLKNPQAVGFDEFLVRTFKRQQQLKAELEQGRDRLLELNSNGGEVAQALAEAIAKEDNNPHLVNFALSLFDVIGLEQEDLGEQSIVISPTGHMLVPDFPGIAEDSTTVTFDRQLALMREDVEFLTWDHPMIRNGIDLITSGDIGKSAISLLINKHLPAGTLLLEAIYMVETQAPKGLNLTRFLPPTPVRILLGNKGNDMAAQVSFTGLEKQLKPVNKQMANKIAKMAQADIKKLIDISEQKIAAKLPELIEKASQDADSTLSAELYRLTSLQAVNKNIRADEIEALEQQRIESLKQIALANWRLDSLRVIVSNKE</sequence>
<proteinExistence type="inferred from homology"/>
<dbReference type="EC" id="3.6.4.-" evidence="1"/>
<dbReference type="EMBL" id="CP000569">
    <property type="protein sequence ID" value="ABN73418.1"/>
    <property type="molecule type" value="Genomic_DNA"/>
</dbReference>
<dbReference type="RefSeq" id="WP_009874664.1">
    <property type="nucleotide sequence ID" value="NC_009053.1"/>
</dbReference>
<dbReference type="SMR" id="A3MZ32"/>
<dbReference type="STRING" id="416269.APL_0314"/>
<dbReference type="EnsemblBacteria" id="ABN73418">
    <property type="protein sequence ID" value="ABN73418"/>
    <property type="gene ID" value="APL_0314"/>
</dbReference>
<dbReference type="KEGG" id="apl:APL_0314"/>
<dbReference type="PATRIC" id="fig|416269.6.peg.322"/>
<dbReference type="eggNOG" id="COG0553">
    <property type="taxonomic scope" value="Bacteria"/>
</dbReference>
<dbReference type="HOGENOM" id="CLU_011520_0_0_6"/>
<dbReference type="Proteomes" id="UP000001432">
    <property type="component" value="Chromosome"/>
</dbReference>
<dbReference type="GO" id="GO:0005524">
    <property type="term" value="F:ATP binding"/>
    <property type="evidence" value="ECO:0007669"/>
    <property type="project" value="UniProtKB-UniRule"/>
</dbReference>
<dbReference type="GO" id="GO:0003677">
    <property type="term" value="F:DNA binding"/>
    <property type="evidence" value="ECO:0007669"/>
    <property type="project" value="UniProtKB-KW"/>
</dbReference>
<dbReference type="GO" id="GO:0004386">
    <property type="term" value="F:helicase activity"/>
    <property type="evidence" value="ECO:0007669"/>
    <property type="project" value="UniProtKB-UniRule"/>
</dbReference>
<dbReference type="GO" id="GO:0016817">
    <property type="term" value="F:hydrolase activity, acting on acid anhydrides"/>
    <property type="evidence" value="ECO:0007669"/>
    <property type="project" value="InterPro"/>
</dbReference>
<dbReference type="GO" id="GO:0006355">
    <property type="term" value="P:regulation of DNA-templated transcription"/>
    <property type="evidence" value="ECO:0007669"/>
    <property type="project" value="UniProtKB-UniRule"/>
</dbReference>
<dbReference type="CDD" id="cd18011">
    <property type="entry name" value="DEXDc_RapA"/>
    <property type="match status" value="1"/>
</dbReference>
<dbReference type="CDD" id="cd18793">
    <property type="entry name" value="SF2_C_SNF"/>
    <property type="match status" value="1"/>
</dbReference>
<dbReference type="Gene3D" id="2.30.30.140">
    <property type="match status" value="1"/>
</dbReference>
<dbReference type="Gene3D" id="2.30.30.930">
    <property type="match status" value="1"/>
</dbReference>
<dbReference type="Gene3D" id="3.30.360.80">
    <property type="match status" value="1"/>
</dbReference>
<dbReference type="Gene3D" id="6.10.140.1500">
    <property type="match status" value="1"/>
</dbReference>
<dbReference type="Gene3D" id="6.10.140.2230">
    <property type="match status" value="1"/>
</dbReference>
<dbReference type="Gene3D" id="3.40.50.300">
    <property type="entry name" value="P-loop containing nucleotide triphosphate hydrolases"/>
    <property type="match status" value="1"/>
</dbReference>
<dbReference type="Gene3D" id="3.40.50.10810">
    <property type="entry name" value="Tandem AAA-ATPase domain"/>
    <property type="match status" value="1"/>
</dbReference>
<dbReference type="HAMAP" id="MF_01821">
    <property type="entry name" value="Helicase_RapA"/>
    <property type="match status" value="1"/>
</dbReference>
<dbReference type="InterPro" id="IPR014001">
    <property type="entry name" value="Helicase_ATP-bd"/>
</dbReference>
<dbReference type="InterPro" id="IPR001650">
    <property type="entry name" value="Helicase_C-like"/>
</dbReference>
<dbReference type="InterPro" id="IPR023949">
    <property type="entry name" value="Helicase_RapA"/>
</dbReference>
<dbReference type="InterPro" id="IPR027417">
    <property type="entry name" value="P-loop_NTPase"/>
</dbReference>
<dbReference type="InterPro" id="IPR022737">
    <property type="entry name" value="RapA_C"/>
</dbReference>
<dbReference type="InterPro" id="IPR038718">
    <property type="entry name" value="SNF2-like_sf"/>
</dbReference>
<dbReference type="InterPro" id="IPR049730">
    <property type="entry name" value="SNF2/RAD54-like_C"/>
</dbReference>
<dbReference type="InterPro" id="IPR000330">
    <property type="entry name" value="SNF2_N"/>
</dbReference>
<dbReference type="InterPro" id="IPR040765">
    <property type="entry name" value="Tudor_1_RapA"/>
</dbReference>
<dbReference type="InterPro" id="IPR040766">
    <property type="entry name" value="Tudor_2_RapA"/>
</dbReference>
<dbReference type="NCBIfam" id="NF003426">
    <property type="entry name" value="PRK04914.1"/>
    <property type="match status" value="1"/>
</dbReference>
<dbReference type="PANTHER" id="PTHR45766">
    <property type="entry name" value="DNA ANNEALING HELICASE AND ENDONUCLEASE ZRANB3 FAMILY MEMBER"/>
    <property type="match status" value="1"/>
</dbReference>
<dbReference type="PANTHER" id="PTHR45766:SF6">
    <property type="entry name" value="SWI_SNF-RELATED MATRIX-ASSOCIATED ACTIN-DEPENDENT REGULATOR OF CHROMATIN SUBFAMILY A-LIKE PROTEIN 1"/>
    <property type="match status" value="1"/>
</dbReference>
<dbReference type="Pfam" id="PF00271">
    <property type="entry name" value="Helicase_C"/>
    <property type="match status" value="1"/>
</dbReference>
<dbReference type="Pfam" id="PF12137">
    <property type="entry name" value="RapA_C"/>
    <property type="match status" value="1"/>
</dbReference>
<dbReference type="Pfam" id="PF00176">
    <property type="entry name" value="SNF2-rel_dom"/>
    <property type="match status" value="1"/>
</dbReference>
<dbReference type="Pfam" id="PF18339">
    <property type="entry name" value="Tudor_1_RapA"/>
    <property type="match status" value="1"/>
</dbReference>
<dbReference type="Pfam" id="PF18337">
    <property type="entry name" value="Tudor_RapA"/>
    <property type="match status" value="1"/>
</dbReference>
<dbReference type="SMART" id="SM00487">
    <property type="entry name" value="DEXDc"/>
    <property type="match status" value="1"/>
</dbReference>
<dbReference type="SMART" id="SM00490">
    <property type="entry name" value="HELICc"/>
    <property type="match status" value="1"/>
</dbReference>
<dbReference type="SUPFAM" id="SSF52540">
    <property type="entry name" value="P-loop containing nucleoside triphosphate hydrolases"/>
    <property type="match status" value="2"/>
</dbReference>
<dbReference type="PROSITE" id="PS51192">
    <property type="entry name" value="HELICASE_ATP_BIND_1"/>
    <property type="match status" value="1"/>
</dbReference>
<dbReference type="PROSITE" id="PS51194">
    <property type="entry name" value="HELICASE_CTER"/>
    <property type="match status" value="1"/>
</dbReference>
<name>RAPA_ACTP2</name>